<evidence type="ECO:0000250" key="1"/>
<evidence type="ECO:0000250" key="2">
    <source>
        <dbReference type="UniProtKB" id="P11177"/>
    </source>
</evidence>
<gene>
    <name type="primary">pdhB</name>
    <name type="synonym">odpB</name>
</gene>
<keyword id="KW-0150">Chloroplast</keyword>
<keyword id="KW-0479">Metal-binding</keyword>
<keyword id="KW-0560">Oxidoreductase</keyword>
<keyword id="KW-0934">Plastid</keyword>
<keyword id="KW-0630">Potassium</keyword>
<keyword id="KW-0670">Pyruvate</keyword>
<keyword id="KW-0786">Thiamine pyrophosphate</keyword>
<feature type="chain" id="PRO_0000162218" description="Pyruvate dehydrogenase E1 component subunit beta">
    <location>
        <begin position="1"/>
        <end position="327"/>
    </location>
</feature>
<feature type="binding site" evidence="2">
    <location>
        <position position="60"/>
    </location>
    <ligand>
        <name>thiamine diphosphate</name>
        <dbReference type="ChEBI" id="CHEBI:58937"/>
        <note>ligand shared with alpha subunit</note>
    </ligand>
</feature>
<feature type="binding site" evidence="2">
    <location>
        <position position="113"/>
    </location>
    <ligand>
        <name>K(+)</name>
        <dbReference type="ChEBI" id="CHEBI:29103"/>
        <note>structural</note>
    </ligand>
</feature>
<feature type="binding site" evidence="2">
    <location>
        <position position="161"/>
    </location>
    <ligand>
        <name>K(+)</name>
        <dbReference type="ChEBI" id="CHEBI:29103"/>
        <note>structural</note>
    </ligand>
</feature>
<feature type="binding site" evidence="2">
    <location>
        <position position="162"/>
    </location>
    <ligand>
        <name>K(+)</name>
        <dbReference type="ChEBI" id="CHEBI:29103"/>
        <note>structural</note>
    </ligand>
</feature>
<feature type="binding site" evidence="2">
    <location>
        <position position="166"/>
    </location>
    <ligand>
        <name>K(+)</name>
        <dbReference type="ChEBI" id="CHEBI:29103"/>
        <note>structural</note>
    </ligand>
</feature>
<geneLocation type="chloroplast"/>
<sequence length="327" mass="36005">MTVRFLFEALNMAIDEEMARNDKVALLGEDIGHYGGSYKVTQNLYAKYGEHRVIDTPIAENSFVGAAIGAAMTGLVTVVEGMNMGFILLAFSQISNNMGMLSATSGGHYHIPIVLRGPGGVGKQLGAEHSQRLECYFQSVPGLQIVACSTPYNAKGLLKSAIRSKNPIFFLEHVLLYNLKAEVPDNDYVLPLEKAEIVRQGNDITILTYSRMRYNVIQAVKVLVEKGYDPEIIDLISLKPFDIETIGKSIQKTHKVLIVEESMMTGGISNVLQSLILENFFDDLDNRPMCLSSPNVPTPYSGPLEEVSIVQTADIIESVEQILTNKM</sequence>
<organism>
    <name type="scientific">Mesostigma viride</name>
    <name type="common">Green alga</name>
    <dbReference type="NCBI Taxonomy" id="41882"/>
    <lineage>
        <taxon>Eukaryota</taxon>
        <taxon>Viridiplantae</taxon>
        <taxon>Streptophyta</taxon>
        <taxon>Mesostigmatophyceae</taxon>
        <taxon>Mesostigmatales</taxon>
        <taxon>Mesostigmataceae</taxon>
        <taxon>Mesostigma</taxon>
    </lineage>
</organism>
<protein>
    <recommendedName>
        <fullName>Pyruvate dehydrogenase E1 component subunit beta</fullName>
        <ecNumber>1.2.4.1</ecNumber>
    </recommendedName>
</protein>
<dbReference type="EC" id="1.2.4.1"/>
<dbReference type="EMBL" id="AF166114">
    <property type="protein sequence ID" value="AAF43837.1"/>
    <property type="molecule type" value="Genomic_DNA"/>
</dbReference>
<dbReference type="RefSeq" id="NP_038396.1">
    <property type="nucleotide sequence ID" value="NC_002186.1"/>
</dbReference>
<dbReference type="SMR" id="Q9MUR4"/>
<dbReference type="GeneID" id="800962"/>
<dbReference type="GO" id="GO:0009507">
    <property type="term" value="C:chloroplast"/>
    <property type="evidence" value="ECO:0007669"/>
    <property type="project" value="UniProtKB-SubCell"/>
</dbReference>
<dbReference type="GO" id="GO:0046872">
    <property type="term" value="F:metal ion binding"/>
    <property type="evidence" value="ECO:0007669"/>
    <property type="project" value="UniProtKB-KW"/>
</dbReference>
<dbReference type="GO" id="GO:0004739">
    <property type="term" value="F:pyruvate dehydrogenase (acetyl-transferring) activity"/>
    <property type="evidence" value="ECO:0007669"/>
    <property type="project" value="UniProtKB-EC"/>
</dbReference>
<dbReference type="CDD" id="cd07036">
    <property type="entry name" value="TPP_PYR_E1-PDHc-beta_like"/>
    <property type="match status" value="1"/>
</dbReference>
<dbReference type="FunFam" id="3.40.50.970:FF:000001">
    <property type="entry name" value="Pyruvate dehydrogenase E1 beta subunit"/>
    <property type="match status" value="1"/>
</dbReference>
<dbReference type="Gene3D" id="3.40.50.920">
    <property type="match status" value="1"/>
</dbReference>
<dbReference type="Gene3D" id="3.40.50.970">
    <property type="match status" value="1"/>
</dbReference>
<dbReference type="InterPro" id="IPR029061">
    <property type="entry name" value="THDP-binding"/>
</dbReference>
<dbReference type="InterPro" id="IPR009014">
    <property type="entry name" value="Transketo_C/PFOR_II"/>
</dbReference>
<dbReference type="InterPro" id="IPR005475">
    <property type="entry name" value="Transketolase-like_Pyr-bd"/>
</dbReference>
<dbReference type="InterPro" id="IPR033248">
    <property type="entry name" value="Transketolase_C"/>
</dbReference>
<dbReference type="NCBIfam" id="NF006667">
    <property type="entry name" value="PRK09212.1"/>
    <property type="match status" value="1"/>
</dbReference>
<dbReference type="PANTHER" id="PTHR43257">
    <property type="entry name" value="PYRUVATE DEHYDROGENASE E1 COMPONENT BETA SUBUNIT"/>
    <property type="match status" value="1"/>
</dbReference>
<dbReference type="PANTHER" id="PTHR43257:SF2">
    <property type="entry name" value="PYRUVATE DEHYDROGENASE E1 COMPONENT SUBUNIT BETA"/>
    <property type="match status" value="1"/>
</dbReference>
<dbReference type="Pfam" id="PF02779">
    <property type="entry name" value="Transket_pyr"/>
    <property type="match status" value="1"/>
</dbReference>
<dbReference type="Pfam" id="PF02780">
    <property type="entry name" value="Transketolase_C"/>
    <property type="match status" value="1"/>
</dbReference>
<dbReference type="SMART" id="SM00861">
    <property type="entry name" value="Transket_pyr"/>
    <property type="match status" value="1"/>
</dbReference>
<dbReference type="SUPFAM" id="SSF52518">
    <property type="entry name" value="Thiamin diphosphate-binding fold (THDP-binding)"/>
    <property type="match status" value="1"/>
</dbReference>
<dbReference type="SUPFAM" id="SSF52922">
    <property type="entry name" value="TK C-terminal domain-like"/>
    <property type="match status" value="1"/>
</dbReference>
<name>ODPB_MESVI</name>
<comment type="function">
    <text evidence="1">The pyruvate dehydrogenase complex catalyzes the overall conversion of pyruvate to acetyl-CoA and CO(2). It contains multiple copies of three enzymatic components: pyruvate dehydrogenase (E1), dihydrolipoamide acetyltransferase (E2) and lipoamide dehydrogenase (E3) (By similarity).</text>
</comment>
<comment type="catalytic activity">
    <reaction>
        <text>N(6)-[(R)-lipoyl]-L-lysyl-[protein] + pyruvate + H(+) = N(6)-[(R)-S(8)-acetyldihydrolipoyl]-L-lysyl-[protein] + CO2</text>
        <dbReference type="Rhea" id="RHEA:19189"/>
        <dbReference type="Rhea" id="RHEA-COMP:10474"/>
        <dbReference type="Rhea" id="RHEA-COMP:10478"/>
        <dbReference type="ChEBI" id="CHEBI:15361"/>
        <dbReference type="ChEBI" id="CHEBI:15378"/>
        <dbReference type="ChEBI" id="CHEBI:16526"/>
        <dbReference type="ChEBI" id="CHEBI:83099"/>
        <dbReference type="ChEBI" id="CHEBI:83111"/>
        <dbReference type="EC" id="1.2.4.1"/>
    </reaction>
</comment>
<comment type="cofactor">
    <cofactor evidence="2">
        <name>thiamine diphosphate</name>
        <dbReference type="ChEBI" id="CHEBI:58937"/>
    </cofactor>
</comment>
<comment type="subunit">
    <text evidence="1">Heterodimer of an alpha and a beta chain.</text>
</comment>
<comment type="subcellular location">
    <subcellularLocation>
        <location>Plastid</location>
        <location>Chloroplast</location>
    </subcellularLocation>
</comment>
<reference key="1">
    <citation type="journal article" date="2000" name="Nature">
        <title>Ancestral chloroplast genome in Mesostigma viride reveals an early branch of green plant evolution.</title>
        <authorList>
            <person name="Lemieux C."/>
            <person name="Otis C."/>
            <person name="Turmel M."/>
        </authorList>
    </citation>
    <scope>NUCLEOTIDE SEQUENCE [LARGE SCALE GENOMIC DNA]</scope>
    <source>
        <strain>NIES-296 / KY-14 / CCMP 2046</strain>
    </source>
</reference>
<accession>Q9MUR4</accession>
<proteinExistence type="inferred from homology"/>